<evidence type="ECO:0000255" key="1">
    <source>
        <dbReference type="HAMAP-Rule" id="MF_03149"/>
    </source>
</evidence>
<keyword id="KW-0067">ATP-binding</keyword>
<keyword id="KW-0436">Ligase</keyword>
<keyword id="KW-0496">Mitochondrion</keyword>
<keyword id="KW-0547">Nucleotide-binding</keyword>
<keyword id="KW-0648">Protein biosynthesis</keyword>
<keyword id="KW-1185">Reference proteome</keyword>
<keyword id="KW-0809">Transit peptide</keyword>
<name>GATC_BRUMA</name>
<proteinExistence type="inferred from homology"/>
<feature type="transit peptide" description="Mitochondrion" evidence="1">
    <location>
        <begin position="1"/>
        <end position="18"/>
    </location>
</feature>
<feature type="chain" id="PRO_0000413313" description="Glutamyl-tRNA(Gln) amidotransferase subunit C, mitochondrial">
    <location>
        <begin position="19"/>
        <end position="195"/>
    </location>
</feature>
<gene>
    <name type="ORF">Bm1_27920</name>
</gene>
<protein>
    <recommendedName>
        <fullName evidence="1">Glutamyl-tRNA(Gln) amidotransferase subunit C, mitochondrial</fullName>
        <shortName evidence="1">Glu-AdT subunit C</shortName>
        <ecNumber evidence="1">6.3.5.-</ecNumber>
    </recommendedName>
</protein>
<reference key="1">
    <citation type="journal article" date="2007" name="Science">
        <title>Draft genome of the filarial nematode parasite Brugia malayi.</title>
        <authorList>
            <person name="Ghedin E."/>
            <person name="Wang S."/>
            <person name="Spiro D."/>
            <person name="Caler E."/>
            <person name="Zhao Q."/>
            <person name="Crabtree J."/>
            <person name="Allen J.E."/>
            <person name="Delcher A.L."/>
            <person name="Guiliano D.B."/>
            <person name="Miranda-Saavedra D."/>
            <person name="Angiuoli S.V."/>
            <person name="Creasy T."/>
            <person name="Amedeo P."/>
            <person name="Haas B."/>
            <person name="El-Sayed N.M."/>
            <person name="Wortman J.R."/>
            <person name="Feldblyum T."/>
            <person name="Tallon L."/>
            <person name="Schatz M."/>
            <person name="Shumway M."/>
            <person name="Koo H."/>
            <person name="Salzberg S.L."/>
            <person name="Schobel S."/>
            <person name="Pertea M."/>
            <person name="Pop M."/>
            <person name="White O."/>
            <person name="Barton G.J."/>
            <person name="Carlow C.K.S."/>
            <person name="Crawford M.J."/>
            <person name="Daub J."/>
            <person name="Dimmic M.W."/>
            <person name="Estes C.F."/>
            <person name="Foster J.M."/>
            <person name="Ganatra M."/>
            <person name="Gregory W.F."/>
            <person name="Johnson N.M."/>
            <person name="Jin J."/>
            <person name="Komuniecki R."/>
            <person name="Korf I."/>
            <person name="Kumar S."/>
            <person name="Laney S."/>
            <person name="Li B.-W."/>
            <person name="Li W."/>
            <person name="Lindblom T.H."/>
            <person name="Lustigman S."/>
            <person name="Ma D."/>
            <person name="Maina C.V."/>
            <person name="Martin D.M."/>
            <person name="McCarter J.P."/>
            <person name="McReynolds L."/>
            <person name="Mitreva M."/>
            <person name="Nutman T.B."/>
            <person name="Parkinson J."/>
            <person name="Peregrin-Alvarez J.M."/>
            <person name="Poole C."/>
            <person name="Ren Q."/>
            <person name="Saunders L."/>
            <person name="Sluder A.E."/>
            <person name="Smith K."/>
            <person name="Stanke M."/>
            <person name="Unnasch T.R."/>
            <person name="Ware J."/>
            <person name="Wei A.D."/>
            <person name="Weil G."/>
            <person name="Williams D.J."/>
            <person name="Zhang Y."/>
            <person name="Williams S.A."/>
            <person name="Fraser-Liggett C."/>
            <person name="Slatko B."/>
            <person name="Blaxter M.L."/>
            <person name="Scott A.L."/>
        </authorList>
    </citation>
    <scope>NUCLEOTIDE SEQUENCE [LARGE SCALE GENOMIC DNA]</scope>
</reference>
<accession>A8PJJ2</accession>
<sequence length="195" mass="22143">MNLSTIGFQVIFKQRLRCVRFGVRCISRETLGCNSVAASSADEDDKIYVPKKPILSPIDQSKVEEPPVFDKALITHLERLSLVWFTDEQAVFNLKEAVRFANQLKLVDTTGIEPLETLLEDMPCPLREDVADNPMTKAEVLMNAAKVVEDYFVAPLENIPLEESDKLNLTKVEEFDRRVMAKKNLLNDSVKEKTE</sequence>
<organism>
    <name type="scientific">Brugia malayi</name>
    <name type="common">Filarial nematode worm</name>
    <dbReference type="NCBI Taxonomy" id="6279"/>
    <lineage>
        <taxon>Eukaryota</taxon>
        <taxon>Metazoa</taxon>
        <taxon>Ecdysozoa</taxon>
        <taxon>Nematoda</taxon>
        <taxon>Chromadorea</taxon>
        <taxon>Rhabditida</taxon>
        <taxon>Spirurina</taxon>
        <taxon>Spiruromorpha</taxon>
        <taxon>Filarioidea</taxon>
        <taxon>Onchocercidae</taxon>
        <taxon>Brugia</taxon>
    </lineage>
</organism>
<comment type="function">
    <text evidence="1">Allows the formation of correctly charged Gln-tRNA(Gln) through the transamidation of misacylated Glu-tRNA(Gln) in the mitochondria. The reaction takes place in the presence of glutamine and ATP through an activated gamma-phospho-Glu-tRNA(Gln).</text>
</comment>
<comment type="catalytic activity">
    <reaction evidence="1">
        <text>L-glutamyl-tRNA(Gln) + L-glutamine + ATP + H2O = L-glutaminyl-tRNA(Gln) + L-glutamate + ADP + phosphate + H(+)</text>
        <dbReference type="Rhea" id="RHEA:17521"/>
        <dbReference type="Rhea" id="RHEA-COMP:9681"/>
        <dbReference type="Rhea" id="RHEA-COMP:9684"/>
        <dbReference type="ChEBI" id="CHEBI:15377"/>
        <dbReference type="ChEBI" id="CHEBI:15378"/>
        <dbReference type="ChEBI" id="CHEBI:29985"/>
        <dbReference type="ChEBI" id="CHEBI:30616"/>
        <dbReference type="ChEBI" id="CHEBI:43474"/>
        <dbReference type="ChEBI" id="CHEBI:58359"/>
        <dbReference type="ChEBI" id="CHEBI:78520"/>
        <dbReference type="ChEBI" id="CHEBI:78521"/>
        <dbReference type="ChEBI" id="CHEBI:456216"/>
    </reaction>
</comment>
<comment type="subunit">
    <text evidence="1">Subunit of the heterotrimeric GatCAB amidotransferase (AdT) complex, composed of A, B and C subunits.</text>
</comment>
<comment type="subcellular location">
    <subcellularLocation>
        <location evidence="1">Mitochondrion</location>
    </subcellularLocation>
</comment>
<comment type="similarity">
    <text evidence="1">Belongs to the GatC family.</text>
</comment>
<dbReference type="EC" id="6.3.5.-" evidence="1"/>
<dbReference type="EMBL" id="DS239359">
    <property type="protein sequence ID" value="EDP34113.1"/>
    <property type="molecule type" value="Genomic_DNA"/>
</dbReference>
<dbReference type="FunCoup" id="A8PJJ2">
    <property type="interactions" value="1524"/>
</dbReference>
<dbReference type="STRING" id="6279.A8PJJ2"/>
<dbReference type="EnsemblMetazoa" id="Bm6979.1">
    <property type="protein sequence ID" value="Bm6979.1"/>
    <property type="gene ID" value="WBGene00227240"/>
</dbReference>
<dbReference type="GeneID" id="6100481"/>
<dbReference type="KEGG" id="bmy:BM_BM6979"/>
<dbReference type="CTD" id="6100481"/>
<dbReference type="WormBase" id="Bm6979">
    <property type="protein sequence ID" value="BM07035"/>
    <property type="gene ID" value="WBGene00227240"/>
</dbReference>
<dbReference type="HOGENOM" id="CLU_1429500_0_0_1"/>
<dbReference type="InParanoid" id="A8PJJ2"/>
<dbReference type="OMA" id="VTEGECA"/>
<dbReference type="OrthoDB" id="5394539at2759"/>
<dbReference type="Proteomes" id="UP000006672">
    <property type="component" value="Unassembled WGS sequence"/>
</dbReference>
<dbReference type="GO" id="GO:0030956">
    <property type="term" value="C:glutamyl-tRNA(Gln) amidotransferase complex"/>
    <property type="evidence" value="ECO:0007669"/>
    <property type="project" value="UniProtKB-UniRule"/>
</dbReference>
<dbReference type="GO" id="GO:0005739">
    <property type="term" value="C:mitochondrion"/>
    <property type="evidence" value="ECO:0007669"/>
    <property type="project" value="UniProtKB-SubCell"/>
</dbReference>
<dbReference type="GO" id="GO:0005524">
    <property type="term" value="F:ATP binding"/>
    <property type="evidence" value="ECO:0007669"/>
    <property type="project" value="UniProtKB-KW"/>
</dbReference>
<dbReference type="GO" id="GO:0050567">
    <property type="term" value="F:glutaminyl-tRNA synthase (glutamine-hydrolyzing) activity"/>
    <property type="evidence" value="ECO:0007669"/>
    <property type="project" value="UniProtKB-UniRule"/>
</dbReference>
<dbReference type="GO" id="GO:0070681">
    <property type="term" value="P:glutaminyl-tRNAGln biosynthesis via transamidation"/>
    <property type="evidence" value="ECO:0007669"/>
    <property type="project" value="UniProtKB-UniRule"/>
</dbReference>
<dbReference type="GO" id="GO:0032543">
    <property type="term" value="P:mitochondrial translation"/>
    <property type="evidence" value="ECO:0007669"/>
    <property type="project" value="UniProtKB-UniRule"/>
</dbReference>
<dbReference type="GO" id="GO:0006450">
    <property type="term" value="P:regulation of translational fidelity"/>
    <property type="evidence" value="ECO:0007669"/>
    <property type="project" value="InterPro"/>
</dbReference>
<dbReference type="HAMAP" id="MF_00122">
    <property type="entry name" value="GatC"/>
    <property type="match status" value="1"/>
</dbReference>
<dbReference type="InterPro" id="IPR036113">
    <property type="entry name" value="Asp/Glu-ADT_sf_sub_c"/>
</dbReference>
<dbReference type="InterPro" id="IPR003837">
    <property type="entry name" value="GatC"/>
</dbReference>
<dbReference type="NCBIfam" id="TIGR00135">
    <property type="entry name" value="gatC"/>
    <property type="match status" value="1"/>
</dbReference>
<dbReference type="PANTHER" id="PTHR15004">
    <property type="entry name" value="GLUTAMYL-TRNA(GLN) AMIDOTRANSFERASE SUBUNIT C, MITOCHONDRIAL"/>
    <property type="match status" value="1"/>
</dbReference>
<dbReference type="PANTHER" id="PTHR15004:SF0">
    <property type="entry name" value="GLUTAMYL-TRNA(GLN) AMIDOTRANSFERASE SUBUNIT C, MITOCHONDRIAL"/>
    <property type="match status" value="1"/>
</dbReference>
<dbReference type="Pfam" id="PF02686">
    <property type="entry name" value="GatC"/>
    <property type="match status" value="1"/>
</dbReference>
<dbReference type="SUPFAM" id="SSF141000">
    <property type="entry name" value="Glu-tRNAGln amidotransferase C subunit"/>
    <property type="match status" value="1"/>
</dbReference>